<accession>Q63T91</accession>
<proteinExistence type="inferred from homology"/>
<sequence length="738" mass="81016">MTDAPFDRADIDALLGARHPDPFACLGPHRVGDATVVRTLLPGALRVRAIAAGGGVLGELRQVDPAGCFAGALPDGQERGERPRYRLSIDWPDARQDVEDAYAFGTLLDEDALARFAAGDPRAALACLGARALDMDGVPGVRFAVWAPGASRVSVVGDFNGWDARRHPMRLRRPWGVWELFVPRIGAGERYKFALRARDGAALPLKADPCACRTEAPPRTASIVADLDALERFGWHDDAWLRARASLDLAHAPVSIYEVHPESWLRVAAEGNRSATWDELAQRLIPYAAGMGFSHVELTPIAEYPFGGSWGYQSLSPFAPSARFGPPEGFARFVEHAHAAGLGVIVDWVPAHFPDDPHGLGKFDGTALFEHADPREGWHPDWHTHVFNVGRREVGAFLIASALAWAHRYHVDGIRVDAVASMLYRDYSRAAGEWVPNVYGGRENLESIAFLKHFNDTLHGPAAPPGVATFAEESTAWPGVTAPTAEHGLGFDFKWNMGWMHDTLAYLREDPIHRRHHHDRLTFGLVYAFSERFVLPLSHDEVVHGKGSLAAKMPGDAWQRLANLRAYFGFMWAHPGKKLLFMGGEFAQWGEFAHDATPQWDLLDAPAHRGVQRLVRDLNRLHAAEPALHALDDRPAGFAWLVGDDRNNSVFAFVRRDDAGRMLVAVCNFTPVPRTDYRLGLPAPGRWAEVLNTDGAAYGGTDAGNGGAVQADEIPAHGERWSAALRLPPLATLWLRPA</sequence>
<keyword id="KW-0119">Carbohydrate metabolism</keyword>
<keyword id="KW-0320">Glycogen biosynthesis</keyword>
<keyword id="KW-0321">Glycogen metabolism</keyword>
<keyword id="KW-0328">Glycosyltransferase</keyword>
<keyword id="KW-1185">Reference proteome</keyword>
<keyword id="KW-0808">Transferase</keyword>
<gene>
    <name evidence="1" type="primary">glgB</name>
    <name type="ordered locus">BPSL2076</name>
</gene>
<dbReference type="EC" id="2.4.1.18" evidence="1"/>
<dbReference type="EMBL" id="BX571965">
    <property type="protein sequence ID" value="CAH36077.1"/>
    <property type="molecule type" value="Genomic_DNA"/>
</dbReference>
<dbReference type="RefSeq" id="WP_004538410.1">
    <property type="nucleotide sequence ID" value="NZ_CP009538.1"/>
</dbReference>
<dbReference type="RefSeq" id="YP_108675.1">
    <property type="nucleotide sequence ID" value="NC_006350.1"/>
</dbReference>
<dbReference type="SMR" id="Q63T91"/>
<dbReference type="STRING" id="272560.BPSL2076"/>
<dbReference type="KEGG" id="bps:BPSL2076"/>
<dbReference type="PATRIC" id="fig|272560.51.peg.75"/>
<dbReference type="eggNOG" id="COG0296">
    <property type="taxonomic scope" value="Bacteria"/>
</dbReference>
<dbReference type="UniPathway" id="UPA00164"/>
<dbReference type="Proteomes" id="UP000000605">
    <property type="component" value="Chromosome 1"/>
</dbReference>
<dbReference type="GO" id="GO:0005829">
    <property type="term" value="C:cytosol"/>
    <property type="evidence" value="ECO:0007669"/>
    <property type="project" value="TreeGrafter"/>
</dbReference>
<dbReference type="GO" id="GO:0003844">
    <property type="term" value="F:1,4-alpha-glucan branching enzyme activity"/>
    <property type="evidence" value="ECO:0007669"/>
    <property type="project" value="UniProtKB-UniRule"/>
</dbReference>
<dbReference type="GO" id="GO:0043169">
    <property type="term" value="F:cation binding"/>
    <property type="evidence" value="ECO:0007669"/>
    <property type="project" value="InterPro"/>
</dbReference>
<dbReference type="GO" id="GO:0004553">
    <property type="term" value="F:hydrolase activity, hydrolyzing O-glycosyl compounds"/>
    <property type="evidence" value="ECO:0007669"/>
    <property type="project" value="InterPro"/>
</dbReference>
<dbReference type="GO" id="GO:0005978">
    <property type="term" value="P:glycogen biosynthetic process"/>
    <property type="evidence" value="ECO:0007669"/>
    <property type="project" value="UniProtKB-UniRule"/>
</dbReference>
<dbReference type="CDD" id="cd11322">
    <property type="entry name" value="AmyAc_Glg_BE"/>
    <property type="match status" value="1"/>
</dbReference>
<dbReference type="CDD" id="cd02855">
    <property type="entry name" value="E_set_GBE_prok_N"/>
    <property type="match status" value="1"/>
</dbReference>
<dbReference type="FunFam" id="2.60.40.1180:FF:000002">
    <property type="entry name" value="1,4-alpha-glucan branching enzyme GlgB"/>
    <property type="match status" value="1"/>
</dbReference>
<dbReference type="FunFam" id="3.20.20.80:FF:000003">
    <property type="entry name" value="1,4-alpha-glucan branching enzyme GlgB"/>
    <property type="match status" value="1"/>
</dbReference>
<dbReference type="Gene3D" id="3.20.20.80">
    <property type="entry name" value="Glycosidases"/>
    <property type="match status" value="1"/>
</dbReference>
<dbReference type="Gene3D" id="2.60.40.1180">
    <property type="entry name" value="Golgi alpha-mannosidase II"/>
    <property type="match status" value="1"/>
</dbReference>
<dbReference type="Gene3D" id="2.60.40.10">
    <property type="entry name" value="Immunoglobulins"/>
    <property type="match status" value="1"/>
</dbReference>
<dbReference type="HAMAP" id="MF_00685">
    <property type="entry name" value="GlgB"/>
    <property type="match status" value="1"/>
</dbReference>
<dbReference type="InterPro" id="IPR006048">
    <property type="entry name" value="A-amylase/branching_C"/>
</dbReference>
<dbReference type="InterPro" id="IPR037439">
    <property type="entry name" value="Branching_enzy"/>
</dbReference>
<dbReference type="InterPro" id="IPR006407">
    <property type="entry name" value="GlgB"/>
</dbReference>
<dbReference type="InterPro" id="IPR054169">
    <property type="entry name" value="GlgB_N"/>
</dbReference>
<dbReference type="InterPro" id="IPR044143">
    <property type="entry name" value="GlgB_N_E_set_prok"/>
</dbReference>
<dbReference type="InterPro" id="IPR006047">
    <property type="entry name" value="Glyco_hydro_13_cat_dom"/>
</dbReference>
<dbReference type="InterPro" id="IPR004193">
    <property type="entry name" value="Glyco_hydro_13_N"/>
</dbReference>
<dbReference type="InterPro" id="IPR013780">
    <property type="entry name" value="Glyco_hydro_b"/>
</dbReference>
<dbReference type="InterPro" id="IPR017853">
    <property type="entry name" value="Glycoside_hydrolase_SF"/>
</dbReference>
<dbReference type="InterPro" id="IPR013783">
    <property type="entry name" value="Ig-like_fold"/>
</dbReference>
<dbReference type="InterPro" id="IPR014756">
    <property type="entry name" value="Ig_E-set"/>
</dbReference>
<dbReference type="NCBIfam" id="TIGR01515">
    <property type="entry name" value="branching_enzym"/>
    <property type="match status" value="1"/>
</dbReference>
<dbReference type="NCBIfam" id="NF003811">
    <property type="entry name" value="PRK05402.1"/>
    <property type="match status" value="1"/>
</dbReference>
<dbReference type="NCBIfam" id="NF008967">
    <property type="entry name" value="PRK12313.1"/>
    <property type="match status" value="1"/>
</dbReference>
<dbReference type="PANTHER" id="PTHR43651">
    <property type="entry name" value="1,4-ALPHA-GLUCAN-BRANCHING ENZYME"/>
    <property type="match status" value="1"/>
</dbReference>
<dbReference type="PANTHER" id="PTHR43651:SF3">
    <property type="entry name" value="1,4-ALPHA-GLUCAN-BRANCHING ENZYME"/>
    <property type="match status" value="1"/>
</dbReference>
<dbReference type="Pfam" id="PF02806">
    <property type="entry name" value="Alpha-amylase_C"/>
    <property type="match status" value="1"/>
</dbReference>
<dbReference type="Pfam" id="PF02922">
    <property type="entry name" value="CBM_48"/>
    <property type="match status" value="1"/>
</dbReference>
<dbReference type="Pfam" id="PF22019">
    <property type="entry name" value="GlgB_N"/>
    <property type="match status" value="1"/>
</dbReference>
<dbReference type="PIRSF" id="PIRSF000463">
    <property type="entry name" value="GlgB"/>
    <property type="match status" value="1"/>
</dbReference>
<dbReference type="SMART" id="SM00642">
    <property type="entry name" value="Aamy"/>
    <property type="match status" value="1"/>
</dbReference>
<dbReference type="SUPFAM" id="SSF51445">
    <property type="entry name" value="(Trans)glycosidases"/>
    <property type="match status" value="1"/>
</dbReference>
<dbReference type="SUPFAM" id="SSF81296">
    <property type="entry name" value="E set domains"/>
    <property type="match status" value="1"/>
</dbReference>
<dbReference type="SUPFAM" id="SSF51011">
    <property type="entry name" value="Glycosyl hydrolase domain"/>
    <property type="match status" value="1"/>
</dbReference>
<comment type="function">
    <text evidence="1">Catalyzes the formation of the alpha-1,6-glucosidic linkages in glycogen by scission of a 1,4-alpha-linked oligosaccharide from growing alpha-1,4-glucan chains and the subsequent attachment of the oligosaccharide to the alpha-1,6 position.</text>
</comment>
<comment type="catalytic activity">
    <reaction evidence="1">
        <text>Transfers a segment of a (1-&gt;4)-alpha-D-glucan chain to a primary hydroxy group in a similar glucan chain.</text>
        <dbReference type="EC" id="2.4.1.18"/>
    </reaction>
</comment>
<comment type="pathway">
    <text evidence="1">Glycan biosynthesis; glycogen biosynthesis.</text>
</comment>
<comment type="subunit">
    <text evidence="1">Monomer.</text>
</comment>
<comment type="similarity">
    <text evidence="1">Belongs to the glycosyl hydrolase 13 family. GlgB subfamily.</text>
</comment>
<protein>
    <recommendedName>
        <fullName evidence="1">1,4-alpha-glucan branching enzyme GlgB</fullName>
        <ecNumber evidence="1">2.4.1.18</ecNumber>
    </recommendedName>
    <alternativeName>
        <fullName evidence="1">1,4-alpha-D-glucan:1,4-alpha-D-glucan 6-glucosyl-transferase</fullName>
    </alternativeName>
    <alternativeName>
        <fullName evidence="1">Alpha-(1-&gt;4)-glucan branching enzyme</fullName>
    </alternativeName>
    <alternativeName>
        <fullName evidence="1">Glycogen branching enzyme</fullName>
        <shortName evidence="1">BE</shortName>
    </alternativeName>
</protein>
<evidence type="ECO:0000255" key="1">
    <source>
        <dbReference type="HAMAP-Rule" id="MF_00685"/>
    </source>
</evidence>
<name>GLGB_BURPS</name>
<organism>
    <name type="scientific">Burkholderia pseudomallei (strain K96243)</name>
    <dbReference type="NCBI Taxonomy" id="272560"/>
    <lineage>
        <taxon>Bacteria</taxon>
        <taxon>Pseudomonadati</taxon>
        <taxon>Pseudomonadota</taxon>
        <taxon>Betaproteobacteria</taxon>
        <taxon>Burkholderiales</taxon>
        <taxon>Burkholderiaceae</taxon>
        <taxon>Burkholderia</taxon>
        <taxon>pseudomallei group</taxon>
    </lineage>
</organism>
<reference key="1">
    <citation type="journal article" date="2004" name="Proc. Natl. Acad. Sci. U.S.A.">
        <title>Genomic plasticity of the causative agent of melioidosis, Burkholderia pseudomallei.</title>
        <authorList>
            <person name="Holden M.T.G."/>
            <person name="Titball R.W."/>
            <person name="Peacock S.J."/>
            <person name="Cerdeno-Tarraga A.-M."/>
            <person name="Atkins T."/>
            <person name="Crossman L.C."/>
            <person name="Pitt T."/>
            <person name="Churcher C."/>
            <person name="Mungall K.L."/>
            <person name="Bentley S.D."/>
            <person name="Sebaihia M."/>
            <person name="Thomson N.R."/>
            <person name="Bason N."/>
            <person name="Beacham I.R."/>
            <person name="Brooks K."/>
            <person name="Brown K.A."/>
            <person name="Brown N.F."/>
            <person name="Challis G.L."/>
            <person name="Cherevach I."/>
            <person name="Chillingworth T."/>
            <person name="Cronin A."/>
            <person name="Crossett B."/>
            <person name="Davis P."/>
            <person name="DeShazer D."/>
            <person name="Feltwell T."/>
            <person name="Fraser A."/>
            <person name="Hance Z."/>
            <person name="Hauser H."/>
            <person name="Holroyd S."/>
            <person name="Jagels K."/>
            <person name="Keith K.E."/>
            <person name="Maddison M."/>
            <person name="Moule S."/>
            <person name="Price C."/>
            <person name="Quail M.A."/>
            <person name="Rabbinowitsch E."/>
            <person name="Rutherford K."/>
            <person name="Sanders M."/>
            <person name="Simmonds M."/>
            <person name="Songsivilai S."/>
            <person name="Stevens K."/>
            <person name="Tumapa S."/>
            <person name="Vesaratchavest M."/>
            <person name="Whitehead S."/>
            <person name="Yeats C."/>
            <person name="Barrell B.G."/>
            <person name="Oyston P.C.F."/>
            <person name="Parkhill J."/>
        </authorList>
    </citation>
    <scope>NUCLEOTIDE SEQUENCE [LARGE SCALE GENOMIC DNA]</scope>
    <source>
        <strain>K96243</strain>
    </source>
</reference>
<feature type="chain" id="PRO_0000188689" description="1,4-alpha-glucan branching enzyme GlgB">
    <location>
        <begin position="1"/>
        <end position="738"/>
    </location>
</feature>
<feature type="active site" description="Nucleophile" evidence="1">
    <location>
        <position position="417"/>
    </location>
</feature>
<feature type="active site" description="Proton donor" evidence="1">
    <location>
        <position position="472"/>
    </location>
</feature>